<accession>Q9HMM4</accession>
<accession>O93747</accession>
<feature type="chain" id="PRO_0000150092" description="DNA repair and recombination protein RadA">
    <location>
        <begin position="1"/>
        <end position="343"/>
    </location>
</feature>
<feature type="binding site" evidence="2">
    <location>
        <begin position="107"/>
        <end position="114"/>
    </location>
    <ligand>
        <name>ATP</name>
        <dbReference type="ChEBI" id="CHEBI:30616"/>
    </ligand>
</feature>
<feature type="sequence conflict" description="In Ref. 1." evidence="3" ref="1">
    <original>MP</original>
    <variation>MRGAPPTRRYIS</variation>
    <location>
        <begin position="1"/>
        <end position="2"/>
    </location>
</feature>
<feature type="sequence conflict" description="In Ref. 1; AAD16062." evidence="3" ref="1">
    <original>E</original>
    <variation>D</variation>
    <location>
        <position position="8"/>
    </location>
</feature>
<feature type="sequence conflict" description="In Ref. 1; AAD16062." evidence="3" ref="1">
    <original>ATA</original>
    <variation>PTT</variation>
    <location>
        <begin position="15"/>
        <end position="17"/>
    </location>
</feature>
<feature type="sequence conflict" description="In Ref. 1; AAD16062." evidence="3" ref="1">
    <original>N</original>
    <variation>S</variation>
    <location>
        <position position="23"/>
    </location>
</feature>
<feature type="sequence conflict" description="In Ref. 1; AAD16062." evidence="3" ref="1">
    <original>SLA</original>
    <variation>ILT</variation>
    <location>
        <begin position="30"/>
        <end position="32"/>
    </location>
</feature>
<feature type="sequence conflict" description="In Ref. 1; AAD16062." evidence="3" ref="1">
    <original>R</original>
    <variation>P</variation>
    <location>
        <position position="75"/>
    </location>
</feature>
<feature type="sequence conflict" description="In Ref. 1; AAD16062." evidence="3" ref="1">
    <original>G</original>
    <variation>A</variation>
    <location>
        <position position="132"/>
    </location>
</feature>
<feature type="sequence conflict" description="In Ref. 1; AAD16062." evidence="3" ref="1">
    <original>K</original>
    <variation>P</variation>
    <location>
        <position position="263"/>
    </location>
</feature>
<feature type="sequence conflict" description="In Ref. 1; AAD16062." evidence="3" ref="1">
    <original>N</original>
    <variation>D</variation>
    <location>
        <position position="266"/>
    </location>
</feature>
<proteinExistence type="inferred from homology"/>
<keyword id="KW-0067">ATP-binding</keyword>
<keyword id="KW-0227">DNA damage</keyword>
<keyword id="KW-0233">DNA recombination</keyword>
<keyword id="KW-0238">DNA-binding</keyword>
<keyword id="KW-0547">Nucleotide-binding</keyword>
<keyword id="KW-1185">Reference proteome</keyword>
<sequence>MPESDLEELPGVGPATAEKLRDNGFDAFQSLAVANSAELSNTADIGESTAADVIQAAREAADVGGFETGATVLERREQIGKLTWNIPEVDDLLGGGVETQSITEVYGEFGAGKSQVTHQLAVNVQLPTEYGGLHGRAVFIDSEDTFRPERIDDMVRGLSDETLQAAMEAHEIEGSTDDEDTLTELVDAFLDKIHVAKGFNSNHQMLLAEKAKEIASEHEDGDWPVRMLTVDSLTAHFRAEYVGRGELADRQQKLNKHLHDLEKVGNLYNAAVLVTNQVQSNPDAFFGDPTKPIGGNILGHKSTFRMYLRKSKNDKRIVKLVDAPNLADGEAVMRVQDEGLKPE</sequence>
<name>RADA_HALSA</name>
<reference key="1">
    <citation type="journal article" date="1999" name="J. Bacteriol.">
        <title>Diversity of radA genes from cultured and uncultured archaea: comparative analysis of putative RadA proteins and their use as a phylogenetic marker.</title>
        <authorList>
            <person name="Sandler S.J."/>
            <person name="Hugenholtz P."/>
            <person name="Schleper C."/>
            <person name="DeLong E.F."/>
            <person name="Pace N.R."/>
            <person name="Clark A.J."/>
        </authorList>
    </citation>
    <scope>NUCLEOTIDE SEQUENCE [GENOMIC DNA]</scope>
</reference>
<reference key="2">
    <citation type="journal article" date="2000" name="Proc. Natl. Acad. Sci. U.S.A.">
        <title>Genome sequence of Halobacterium species NRC-1.</title>
        <authorList>
            <person name="Ng W.V."/>
            <person name="Kennedy S.P."/>
            <person name="Mahairas G.G."/>
            <person name="Berquist B."/>
            <person name="Pan M."/>
            <person name="Shukla H.D."/>
            <person name="Lasky S.R."/>
            <person name="Baliga N.S."/>
            <person name="Thorsson V."/>
            <person name="Sbrogna J."/>
            <person name="Swartzell S."/>
            <person name="Weir D."/>
            <person name="Hall J."/>
            <person name="Dahl T.A."/>
            <person name="Welti R."/>
            <person name="Goo Y.A."/>
            <person name="Leithauser B."/>
            <person name="Keller K."/>
            <person name="Cruz R."/>
            <person name="Danson M.J."/>
            <person name="Hough D.W."/>
            <person name="Maddocks D.G."/>
            <person name="Jablonski P.E."/>
            <person name="Krebs M.P."/>
            <person name="Angevine C.M."/>
            <person name="Dale H."/>
            <person name="Isenbarger T.A."/>
            <person name="Peck R.F."/>
            <person name="Pohlschroder M."/>
            <person name="Spudich J.L."/>
            <person name="Jung K.-H."/>
            <person name="Alam M."/>
            <person name="Freitas T."/>
            <person name="Hou S."/>
            <person name="Daniels C.J."/>
            <person name="Dennis P.P."/>
            <person name="Omer A.D."/>
            <person name="Ebhardt H."/>
            <person name="Lowe T.M."/>
            <person name="Liang P."/>
            <person name="Riley M."/>
            <person name="Hood L."/>
            <person name="DasSarma S."/>
        </authorList>
    </citation>
    <scope>NUCLEOTIDE SEQUENCE [LARGE SCALE GENOMIC DNA]</scope>
    <source>
        <strain>ATCC 700922 / JCM 11081 / NRC-1</strain>
    </source>
</reference>
<evidence type="ECO:0000250" key="1"/>
<evidence type="ECO:0000255" key="2"/>
<evidence type="ECO:0000305" key="3"/>
<organism>
    <name type="scientific">Halobacterium salinarum (strain ATCC 700922 / JCM 11081 / NRC-1)</name>
    <name type="common">Halobacterium halobium</name>
    <dbReference type="NCBI Taxonomy" id="64091"/>
    <lineage>
        <taxon>Archaea</taxon>
        <taxon>Methanobacteriati</taxon>
        <taxon>Methanobacteriota</taxon>
        <taxon>Stenosarchaea group</taxon>
        <taxon>Halobacteria</taxon>
        <taxon>Halobacteriales</taxon>
        <taxon>Halobacteriaceae</taxon>
        <taxon>Halobacterium</taxon>
        <taxon>Halobacterium salinarum NRC-34001</taxon>
    </lineage>
</organism>
<protein>
    <recommendedName>
        <fullName>DNA repair and recombination protein RadA</fullName>
    </recommendedName>
</protein>
<gene>
    <name type="primary">radA</name>
    <name type="synonym">radA1</name>
    <name type="ordered locus">VNG_2473G</name>
</gene>
<dbReference type="EMBL" id="AF090196">
    <property type="protein sequence ID" value="AAD16062.1"/>
    <property type="molecule type" value="Genomic_DNA"/>
</dbReference>
<dbReference type="EMBL" id="AE004437">
    <property type="protein sequence ID" value="AAG20547.1"/>
    <property type="status" value="ALT_INIT"/>
    <property type="molecule type" value="Genomic_DNA"/>
</dbReference>
<dbReference type="PIR" id="G84397">
    <property type="entry name" value="G84397"/>
</dbReference>
<dbReference type="PIR" id="T43802">
    <property type="entry name" value="T43802"/>
</dbReference>
<dbReference type="RefSeq" id="WP_012289511.1">
    <property type="nucleotide sequence ID" value="NC_002607.1"/>
</dbReference>
<dbReference type="SMR" id="Q9HMM4"/>
<dbReference type="FunCoup" id="Q9HMM4">
    <property type="interactions" value="104"/>
</dbReference>
<dbReference type="STRING" id="64091.VNG_2473G"/>
<dbReference type="PaxDb" id="64091-VNG_2473G"/>
<dbReference type="GeneID" id="89348476"/>
<dbReference type="KEGG" id="hal:VNG_2473G"/>
<dbReference type="PATRIC" id="fig|64091.14.peg.1915"/>
<dbReference type="HOGENOM" id="CLU_041732_0_0_2"/>
<dbReference type="InParanoid" id="Q9HMM4"/>
<dbReference type="OrthoDB" id="31129at2157"/>
<dbReference type="PhylomeDB" id="Q9HMM4"/>
<dbReference type="Proteomes" id="UP000000554">
    <property type="component" value="Chromosome"/>
</dbReference>
<dbReference type="GO" id="GO:0005524">
    <property type="term" value="F:ATP binding"/>
    <property type="evidence" value="ECO:0007669"/>
    <property type="project" value="UniProtKB-UniRule"/>
</dbReference>
<dbReference type="GO" id="GO:0016887">
    <property type="term" value="F:ATP hydrolysis activity"/>
    <property type="evidence" value="ECO:0007669"/>
    <property type="project" value="InterPro"/>
</dbReference>
<dbReference type="GO" id="GO:0140664">
    <property type="term" value="F:ATP-dependent DNA damage sensor activity"/>
    <property type="evidence" value="ECO:0007669"/>
    <property type="project" value="InterPro"/>
</dbReference>
<dbReference type="GO" id="GO:0003684">
    <property type="term" value="F:damaged DNA binding"/>
    <property type="evidence" value="ECO:0007669"/>
    <property type="project" value="UniProtKB-UniRule"/>
</dbReference>
<dbReference type="GO" id="GO:0006310">
    <property type="term" value="P:DNA recombination"/>
    <property type="evidence" value="ECO:0007669"/>
    <property type="project" value="UniProtKB-UniRule"/>
</dbReference>
<dbReference type="GO" id="GO:0006281">
    <property type="term" value="P:DNA repair"/>
    <property type="evidence" value="ECO:0007669"/>
    <property type="project" value="UniProtKB-UniRule"/>
</dbReference>
<dbReference type="CDD" id="cd19515">
    <property type="entry name" value="archRadA"/>
    <property type="match status" value="1"/>
</dbReference>
<dbReference type="Gene3D" id="1.10.150.20">
    <property type="entry name" value="5' to 3' exonuclease, C-terminal subdomain"/>
    <property type="match status" value="1"/>
</dbReference>
<dbReference type="Gene3D" id="3.40.50.300">
    <property type="entry name" value="P-loop containing nucleotide triphosphate hydrolases"/>
    <property type="match status" value="1"/>
</dbReference>
<dbReference type="HAMAP" id="MF_00348">
    <property type="entry name" value="RadA_arch"/>
    <property type="match status" value="1"/>
</dbReference>
<dbReference type="InterPro" id="IPR003593">
    <property type="entry name" value="AAA+_ATPase"/>
</dbReference>
<dbReference type="InterPro" id="IPR013632">
    <property type="entry name" value="DNA_recomb/repair_Rad51_C"/>
</dbReference>
<dbReference type="InterPro" id="IPR011938">
    <property type="entry name" value="DNA_recomb/repair_RadA"/>
</dbReference>
<dbReference type="InterPro" id="IPR016467">
    <property type="entry name" value="DNA_recomb/repair_RecA-like"/>
</dbReference>
<dbReference type="InterPro" id="IPR010995">
    <property type="entry name" value="DNA_repair_Rad51/TF_NusA_a-hlx"/>
</dbReference>
<dbReference type="InterPro" id="IPR003583">
    <property type="entry name" value="Hlx-hairpin-Hlx_DNA-bd_motif"/>
</dbReference>
<dbReference type="InterPro" id="IPR027417">
    <property type="entry name" value="P-loop_NTPase"/>
</dbReference>
<dbReference type="InterPro" id="IPR020588">
    <property type="entry name" value="RecA_ATP-bd"/>
</dbReference>
<dbReference type="InterPro" id="IPR020587">
    <property type="entry name" value="RecA_monomer-monomer_interface"/>
</dbReference>
<dbReference type="NCBIfam" id="NF003301">
    <property type="entry name" value="PRK04301.1"/>
    <property type="match status" value="1"/>
</dbReference>
<dbReference type="NCBIfam" id="TIGR02236">
    <property type="entry name" value="recomb_radA"/>
    <property type="match status" value="1"/>
</dbReference>
<dbReference type="PANTHER" id="PTHR22942:SF30">
    <property type="entry name" value="MEIOTIC RECOMBINATION PROTEIN DMC1_LIM15 HOMOLOG"/>
    <property type="match status" value="1"/>
</dbReference>
<dbReference type="PANTHER" id="PTHR22942">
    <property type="entry name" value="RECA/RAD51/RADA DNA STRAND-PAIRING FAMILY MEMBER"/>
    <property type="match status" value="1"/>
</dbReference>
<dbReference type="Pfam" id="PF14520">
    <property type="entry name" value="HHH_5"/>
    <property type="match status" value="1"/>
</dbReference>
<dbReference type="Pfam" id="PF08423">
    <property type="entry name" value="Rad51"/>
    <property type="match status" value="2"/>
</dbReference>
<dbReference type="PIRSF" id="PIRSF005856">
    <property type="entry name" value="Rad51"/>
    <property type="match status" value="1"/>
</dbReference>
<dbReference type="SMART" id="SM00382">
    <property type="entry name" value="AAA"/>
    <property type="match status" value="1"/>
</dbReference>
<dbReference type="SMART" id="SM00278">
    <property type="entry name" value="HhH1"/>
    <property type="match status" value="2"/>
</dbReference>
<dbReference type="SUPFAM" id="SSF52540">
    <property type="entry name" value="P-loop containing nucleoside triphosphate hydrolases"/>
    <property type="match status" value="1"/>
</dbReference>
<dbReference type="SUPFAM" id="SSF47794">
    <property type="entry name" value="Rad51 N-terminal domain-like"/>
    <property type="match status" value="1"/>
</dbReference>
<dbReference type="PROSITE" id="PS50162">
    <property type="entry name" value="RECA_2"/>
    <property type="match status" value="1"/>
</dbReference>
<dbReference type="PROSITE" id="PS50163">
    <property type="entry name" value="RECA_3"/>
    <property type="match status" value="1"/>
</dbReference>
<comment type="function">
    <text evidence="1">Involved in DNA repair and in homologous recombination. Binds and assemble on single-stranded DNA to form a nucleoprotein filament. Hydrolyzes ATP in a ssDNA-dependent manner and promotes DNA strand exchange between homologous DNA molecules (By similarity).</text>
</comment>
<comment type="similarity">
    <text evidence="3">Belongs to the eukaryotic RecA-like protein family.</text>
</comment>
<comment type="sequence caution" evidence="3">
    <conflict type="erroneous initiation">
        <sequence resource="EMBL-CDS" id="AAG20547"/>
    </conflict>
</comment>